<evidence type="ECO:0000250" key="1"/>
<evidence type="ECO:0000255" key="2"/>
<evidence type="ECO:0000255" key="3">
    <source>
        <dbReference type="PROSITE-ProRule" id="PRU00156"/>
    </source>
</evidence>
<evidence type="ECO:0000255" key="4">
    <source>
        <dbReference type="PROSITE-ProRule" id="PRU10138"/>
    </source>
</evidence>
<evidence type="ECO:0000256" key="5">
    <source>
        <dbReference type="SAM" id="MobiDB-lite"/>
    </source>
</evidence>
<evidence type="ECO:0000305" key="6"/>
<comment type="function">
    <text evidence="1">PPIases accelerate the folding of proteins. It catalyzes the cis-trans isomerization of proline imidic peptide bonds in oligopeptides (By similarity).</text>
</comment>
<comment type="catalytic activity">
    <reaction>
        <text>[protein]-peptidylproline (omega=180) = [protein]-peptidylproline (omega=0)</text>
        <dbReference type="Rhea" id="RHEA:16237"/>
        <dbReference type="Rhea" id="RHEA-COMP:10747"/>
        <dbReference type="Rhea" id="RHEA-COMP:10748"/>
        <dbReference type="ChEBI" id="CHEBI:83833"/>
        <dbReference type="ChEBI" id="CHEBI:83834"/>
        <dbReference type="EC" id="5.2.1.8"/>
    </reaction>
</comment>
<comment type="activity regulation">
    <text evidence="1">Inhibited by cyclosporin A (CsA).</text>
</comment>
<comment type="subcellular location">
    <subcellularLocation>
        <location evidence="4">Endoplasmic reticulum lumen</location>
    </subcellularLocation>
</comment>
<comment type="similarity">
    <text evidence="6">Belongs to the cyclophilin-type PPIase family. PPIase B subfamily.</text>
</comment>
<gene>
    <name type="primary">CPR2</name>
    <name type="ordered locus">YALI0E23155g</name>
</gene>
<reference key="1">
    <citation type="journal article" date="2004" name="Nature">
        <title>Genome evolution in yeasts.</title>
        <authorList>
            <person name="Dujon B."/>
            <person name="Sherman D."/>
            <person name="Fischer G."/>
            <person name="Durrens P."/>
            <person name="Casaregola S."/>
            <person name="Lafontaine I."/>
            <person name="de Montigny J."/>
            <person name="Marck C."/>
            <person name="Neuveglise C."/>
            <person name="Talla E."/>
            <person name="Goffard N."/>
            <person name="Frangeul L."/>
            <person name="Aigle M."/>
            <person name="Anthouard V."/>
            <person name="Babour A."/>
            <person name="Barbe V."/>
            <person name="Barnay S."/>
            <person name="Blanchin S."/>
            <person name="Beckerich J.-M."/>
            <person name="Beyne E."/>
            <person name="Bleykasten C."/>
            <person name="Boisrame A."/>
            <person name="Boyer J."/>
            <person name="Cattolico L."/>
            <person name="Confanioleri F."/>
            <person name="de Daruvar A."/>
            <person name="Despons L."/>
            <person name="Fabre E."/>
            <person name="Fairhead C."/>
            <person name="Ferry-Dumazet H."/>
            <person name="Groppi A."/>
            <person name="Hantraye F."/>
            <person name="Hennequin C."/>
            <person name="Jauniaux N."/>
            <person name="Joyet P."/>
            <person name="Kachouri R."/>
            <person name="Kerrest A."/>
            <person name="Koszul R."/>
            <person name="Lemaire M."/>
            <person name="Lesur I."/>
            <person name="Ma L."/>
            <person name="Muller H."/>
            <person name="Nicaud J.-M."/>
            <person name="Nikolski M."/>
            <person name="Oztas S."/>
            <person name="Ozier-Kalogeropoulos O."/>
            <person name="Pellenz S."/>
            <person name="Potier S."/>
            <person name="Richard G.-F."/>
            <person name="Straub M.-L."/>
            <person name="Suleau A."/>
            <person name="Swennen D."/>
            <person name="Tekaia F."/>
            <person name="Wesolowski-Louvel M."/>
            <person name="Westhof E."/>
            <person name="Wirth B."/>
            <person name="Zeniou-Meyer M."/>
            <person name="Zivanovic Y."/>
            <person name="Bolotin-Fukuhara M."/>
            <person name="Thierry A."/>
            <person name="Bouchier C."/>
            <person name="Caudron B."/>
            <person name="Scarpelli C."/>
            <person name="Gaillardin C."/>
            <person name="Weissenbach J."/>
            <person name="Wincker P."/>
            <person name="Souciet J.-L."/>
        </authorList>
    </citation>
    <scope>NUCLEOTIDE SEQUENCE [LARGE SCALE GENOMIC DNA]</scope>
    <source>
        <strain>CLIB 122 / E 150</strain>
    </source>
</reference>
<protein>
    <recommendedName>
        <fullName>Peptidyl-prolyl cis-trans isomerase B</fullName>
        <shortName>PPIase B</shortName>
        <ecNumber>5.2.1.8</ecNumber>
    </recommendedName>
    <alternativeName>
        <fullName>Rotamase B</fullName>
    </alternativeName>
</protein>
<feature type="signal peptide" evidence="2">
    <location>
        <begin position="1"/>
        <end position="24"/>
    </location>
</feature>
<feature type="chain" id="PRO_0000233051" description="Peptidyl-prolyl cis-trans isomerase B">
    <location>
        <begin position="25"/>
        <end position="228"/>
    </location>
</feature>
<feature type="domain" description="PPIase cyclophilin-type" evidence="3">
    <location>
        <begin position="35"/>
        <end position="192"/>
    </location>
</feature>
<feature type="region of interest" description="Disordered" evidence="5">
    <location>
        <begin position="172"/>
        <end position="228"/>
    </location>
</feature>
<feature type="short sequence motif" description="Prevents secretion from ER">
    <location>
        <begin position="225"/>
        <end position="228"/>
    </location>
</feature>
<feature type="compositionally biased region" description="Basic and acidic residues" evidence="5">
    <location>
        <begin position="194"/>
        <end position="228"/>
    </location>
</feature>
<feature type="glycosylation site" description="N-linked (GlcNAc...) asparagine" evidence="2">
    <location>
        <position position="136"/>
    </location>
</feature>
<proteinExistence type="inferred from homology"/>
<accession>Q6C4W6</accession>
<sequence>MKLFATIGVLLVALLAFFVQPAQAEPDAEITHKVYFDIKQGEESLGKIVMGLYGDVVPKTVENFRALCTGETGKGYKGSKFHRVIKNFMIQGGDFTRGDGTGGESIYGRKFPDENFQLKHTKPYKLSMANAGRDTNGSQFFITTVVTSWLDGKHVVFGEVLEGQDIVDAIENAPTGARSNPKVDITIADAGEIPVEKSETKEAEPAKEDAKEPKEDVKKKGKSDKDEL</sequence>
<name>PPIB_YARLI</name>
<keyword id="KW-0256">Endoplasmic reticulum</keyword>
<keyword id="KW-0325">Glycoprotein</keyword>
<keyword id="KW-0413">Isomerase</keyword>
<keyword id="KW-1185">Reference proteome</keyword>
<keyword id="KW-0697">Rotamase</keyword>
<keyword id="KW-0732">Signal</keyword>
<dbReference type="EC" id="5.2.1.8"/>
<dbReference type="EMBL" id="CR382131">
    <property type="protein sequence ID" value="CAG79895.1"/>
    <property type="molecule type" value="Genomic_DNA"/>
</dbReference>
<dbReference type="RefSeq" id="XP_504296.1">
    <property type="nucleotide sequence ID" value="XM_504296.1"/>
</dbReference>
<dbReference type="SMR" id="Q6C4W6"/>
<dbReference type="FunCoup" id="Q6C4W6">
    <property type="interactions" value="248"/>
</dbReference>
<dbReference type="STRING" id="284591.Q6C4W6"/>
<dbReference type="GlyCosmos" id="Q6C4W6">
    <property type="glycosylation" value="1 site, No reported glycans"/>
</dbReference>
<dbReference type="EnsemblFungi" id="CAG79895">
    <property type="protein sequence ID" value="CAG79895"/>
    <property type="gene ID" value="YALI0_E23155g"/>
</dbReference>
<dbReference type="KEGG" id="yli:2912927"/>
<dbReference type="VEuPathDB" id="FungiDB:YALI0_E23155g"/>
<dbReference type="HOGENOM" id="CLU_012062_4_1_1"/>
<dbReference type="InParanoid" id="Q6C4W6"/>
<dbReference type="OMA" id="ENHEITH"/>
<dbReference type="OrthoDB" id="119497at4891"/>
<dbReference type="Proteomes" id="UP000001300">
    <property type="component" value="Chromosome E"/>
</dbReference>
<dbReference type="GO" id="GO:0005737">
    <property type="term" value="C:cytoplasm"/>
    <property type="evidence" value="ECO:0000318"/>
    <property type="project" value="GO_Central"/>
</dbReference>
<dbReference type="GO" id="GO:0005783">
    <property type="term" value="C:endoplasmic reticulum"/>
    <property type="evidence" value="ECO:0000318"/>
    <property type="project" value="GO_Central"/>
</dbReference>
<dbReference type="GO" id="GO:0005788">
    <property type="term" value="C:endoplasmic reticulum lumen"/>
    <property type="evidence" value="ECO:0007669"/>
    <property type="project" value="UniProtKB-SubCell"/>
</dbReference>
<dbReference type="GO" id="GO:0016018">
    <property type="term" value="F:cyclosporin A binding"/>
    <property type="evidence" value="ECO:0000318"/>
    <property type="project" value="GO_Central"/>
</dbReference>
<dbReference type="GO" id="GO:0003755">
    <property type="term" value="F:peptidyl-prolyl cis-trans isomerase activity"/>
    <property type="evidence" value="ECO:0000318"/>
    <property type="project" value="GO_Central"/>
</dbReference>
<dbReference type="GO" id="GO:0006457">
    <property type="term" value="P:protein folding"/>
    <property type="evidence" value="ECO:0000318"/>
    <property type="project" value="GO_Central"/>
</dbReference>
<dbReference type="CDD" id="cd01926">
    <property type="entry name" value="cyclophilin_ABH_like"/>
    <property type="match status" value="1"/>
</dbReference>
<dbReference type="FunFam" id="2.40.100.10:FF:000001">
    <property type="entry name" value="Peptidyl-prolyl cis-trans isomerase"/>
    <property type="match status" value="1"/>
</dbReference>
<dbReference type="Gene3D" id="2.40.100.10">
    <property type="entry name" value="Cyclophilin-like"/>
    <property type="match status" value="1"/>
</dbReference>
<dbReference type="InterPro" id="IPR029000">
    <property type="entry name" value="Cyclophilin-like_dom_sf"/>
</dbReference>
<dbReference type="InterPro" id="IPR020892">
    <property type="entry name" value="Cyclophilin-type_PPIase_CS"/>
</dbReference>
<dbReference type="InterPro" id="IPR002130">
    <property type="entry name" value="Cyclophilin-type_PPIase_dom"/>
</dbReference>
<dbReference type="PANTHER" id="PTHR11071">
    <property type="entry name" value="PEPTIDYL-PROLYL CIS-TRANS ISOMERASE"/>
    <property type="match status" value="1"/>
</dbReference>
<dbReference type="PANTHER" id="PTHR11071:SF561">
    <property type="entry name" value="PEPTIDYL-PROLYL CIS-TRANS ISOMERASE D-RELATED"/>
    <property type="match status" value="1"/>
</dbReference>
<dbReference type="Pfam" id="PF00160">
    <property type="entry name" value="Pro_isomerase"/>
    <property type="match status" value="1"/>
</dbReference>
<dbReference type="PRINTS" id="PR00153">
    <property type="entry name" value="CSAPPISMRASE"/>
</dbReference>
<dbReference type="SUPFAM" id="SSF50891">
    <property type="entry name" value="Cyclophilin-like"/>
    <property type="match status" value="1"/>
</dbReference>
<dbReference type="PROSITE" id="PS00170">
    <property type="entry name" value="CSA_PPIASE_1"/>
    <property type="match status" value="1"/>
</dbReference>
<dbReference type="PROSITE" id="PS50072">
    <property type="entry name" value="CSA_PPIASE_2"/>
    <property type="match status" value="1"/>
</dbReference>
<dbReference type="PROSITE" id="PS00014">
    <property type="entry name" value="ER_TARGET"/>
    <property type="match status" value="1"/>
</dbReference>
<organism>
    <name type="scientific">Yarrowia lipolytica (strain CLIB 122 / E 150)</name>
    <name type="common">Yeast</name>
    <name type="synonym">Candida lipolytica</name>
    <dbReference type="NCBI Taxonomy" id="284591"/>
    <lineage>
        <taxon>Eukaryota</taxon>
        <taxon>Fungi</taxon>
        <taxon>Dikarya</taxon>
        <taxon>Ascomycota</taxon>
        <taxon>Saccharomycotina</taxon>
        <taxon>Dipodascomycetes</taxon>
        <taxon>Dipodascales</taxon>
        <taxon>Dipodascales incertae sedis</taxon>
        <taxon>Yarrowia</taxon>
    </lineage>
</organism>